<comment type="function">
    <text evidence="2">Required for the normal development of cilia in brain ependymal cells lining the ventricular surfaces.</text>
</comment>
<comment type="tissue specificity">
    <text evidence="2">Expressed in the brain, specifically in hypothalamus, pineal gland, and ependymal cells of the aqueduct of Sylvius, as well as in the choroid plexus of the third ventricle. Expressed in the ependymal cells lining the lateral ventricles (at protein level).</text>
</comment>
<name>JHY_MOUSE</name>
<keyword id="KW-0970">Cilium biogenesis/degradation</keyword>
<keyword id="KW-1185">Reference proteome</keyword>
<dbReference type="EMBL" id="AC159820">
    <property type="status" value="NOT_ANNOTATED_CDS"/>
    <property type="molecule type" value="Genomic_DNA"/>
</dbReference>
<dbReference type="EMBL" id="AK016487">
    <property type="protein sequence ID" value="BAB30266.1"/>
    <property type="molecule type" value="mRNA"/>
</dbReference>
<dbReference type="CCDS" id="CCDS40592.1"/>
<dbReference type="RefSeq" id="NP_001074590.1">
    <property type="nucleotide sequence ID" value="NM_001081121.2"/>
</dbReference>
<dbReference type="RefSeq" id="NP_001344289.1">
    <property type="nucleotide sequence ID" value="NM_001357360.1"/>
</dbReference>
<dbReference type="RefSeq" id="XP_006510662.1">
    <property type="nucleotide sequence ID" value="XM_006510599.3"/>
</dbReference>
<dbReference type="RefSeq" id="XP_006510663.1">
    <property type="nucleotide sequence ID" value="XM_006510600.5"/>
</dbReference>
<dbReference type="FunCoup" id="E9Q793">
    <property type="interactions" value="2"/>
</dbReference>
<dbReference type="STRING" id="10090.ENSMUSP00000034521"/>
<dbReference type="iPTMnet" id="E9Q793"/>
<dbReference type="PhosphoSitePlus" id="E9Q793"/>
<dbReference type="SwissPalm" id="E9Q793"/>
<dbReference type="PaxDb" id="10090-ENSMUSP00000034521"/>
<dbReference type="ProteomicsDB" id="269027"/>
<dbReference type="Antibodypedia" id="49546">
    <property type="antibodies" value="17 antibodies from 6 providers"/>
</dbReference>
<dbReference type="Ensembl" id="ENSMUST00000034521.8">
    <property type="protein sequence ID" value="ENSMUSP00000034521.8"/>
    <property type="gene ID" value="ENSMUSG00000032023.8"/>
</dbReference>
<dbReference type="GeneID" id="70989"/>
<dbReference type="KEGG" id="mmu:70989"/>
<dbReference type="UCSC" id="uc009pac.1">
    <property type="organism name" value="mouse"/>
</dbReference>
<dbReference type="AGR" id="MGI:1918239"/>
<dbReference type="CTD" id="79864"/>
<dbReference type="MGI" id="MGI:1918239">
    <property type="gene designation" value="Jhy"/>
</dbReference>
<dbReference type="VEuPathDB" id="HostDB:ENSMUSG00000032023"/>
<dbReference type="eggNOG" id="ENOG502S6KC">
    <property type="taxonomic scope" value="Eukaryota"/>
</dbReference>
<dbReference type="GeneTree" id="ENSGT00390000002823"/>
<dbReference type="HOGENOM" id="CLU_407472_0_0_1"/>
<dbReference type="InParanoid" id="E9Q793"/>
<dbReference type="OMA" id="WKFHPSS"/>
<dbReference type="OrthoDB" id="10057281at2759"/>
<dbReference type="TreeFam" id="TF335473"/>
<dbReference type="BioGRID-ORCS" id="70989">
    <property type="hits" value="6 hits in 80 CRISPR screens"/>
</dbReference>
<dbReference type="ChiTaRS" id="Jhy">
    <property type="organism name" value="mouse"/>
</dbReference>
<dbReference type="PRO" id="PR:E9Q793"/>
<dbReference type="Proteomes" id="UP000000589">
    <property type="component" value="Chromosome 9"/>
</dbReference>
<dbReference type="RNAct" id="E9Q793">
    <property type="molecule type" value="protein"/>
</dbReference>
<dbReference type="Bgee" id="ENSMUSG00000032023">
    <property type="expression patterns" value="Expressed in spermatid and 28 other cell types or tissues"/>
</dbReference>
<dbReference type="ExpressionAtlas" id="E9Q793">
    <property type="expression patterns" value="baseline and differential"/>
</dbReference>
<dbReference type="GO" id="GO:0005576">
    <property type="term" value="C:extracellular region"/>
    <property type="evidence" value="ECO:0007669"/>
    <property type="project" value="GOC"/>
</dbReference>
<dbReference type="GO" id="GO:0035082">
    <property type="term" value="P:axoneme assembly"/>
    <property type="evidence" value="ECO:0000315"/>
    <property type="project" value="MGI"/>
</dbReference>
<dbReference type="GO" id="GO:0007420">
    <property type="term" value="P:brain development"/>
    <property type="evidence" value="ECO:0000315"/>
    <property type="project" value="MGI"/>
</dbReference>
<dbReference type="GO" id="GO:0030154">
    <property type="term" value="P:cell differentiation"/>
    <property type="evidence" value="ECO:0000315"/>
    <property type="project" value="MGI"/>
</dbReference>
<dbReference type="GO" id="GO:0090660">
    <property type="term" value="P:cerebrospinal fluid circulation"/>
    <property type="evidence" value="ECO:0000315"/>
    <property type="project" value="MGI"/>
</dbReference>
<dbReference type="GO" id="GO:0051649">
    <property type="term" value="P:establishment of localization in cell"/>
    <property type="evidence" value="ECO:0000315"/>
    <property type="project" value="MGI"/>
</dbReference>
<dbReference type="GO" id="GO:0044458">
    <property type="term" value="P:motile cilium assembly"/>
    <property type="evidence" value="ECO:0000315"/>
    <property type="project" value="MGI"/>
</dbReference>
<dbReference type="GO" id="GO:0090175">
    <property type="term" value="P:regulation of establishment of planar polarity"/>
    <property type="evidence" value="ECO:0000315"/>
    <property type="project" value="MGI"/>
</dbReference>
<dbReference type="InterPro" id="IPR027968">
    <property type="entry name" value="JHY"/>
</dbReference>
<dbReference type="PANTHER" id="PTHR14726">
    <property type="entry name" value="JHY PROTEIN HOMOLOG"/>
    <property type="match status" value="1"/>
</dbReference>
<dbReference type="PANTHER" id="PTHR14726:SF1">
    <property type="entry name" value="JHY PROTEIN HOMOLOG"/>
    <property type="match status" value="1"/>
</dbReference>
<dbReference type="Pfam" id="PF15261">
    <property type="entry name" value="JHY"/>
    <property type="match status" value="1"/>
</dbReference>
<organism>
    <name type="scientific">Mus musculus</name>
    <name type="common">Mouse</name>
    <dbReference type="NCBI Taxonomy" id="10090"/>
    <lineage>
        <taxon>Eukaryota</taxon>
        <taxon>Metazoa</taxon>
        <taxon>Chordata</taxon>
        <taxon>Craniata</taxon>
        <taxon>Vertebrata</taxon>
        <taxon>Euteleostomi</taxon>
        <taxon>Mammalia</taxon>
        <taxon>Eutheria</taxon>
        <taxon>Euarchontoglires</taxon>
        <taxon>Glires</taxon>
        <taxon>Rodentia</taxon>
        <taxon>Myomorpha</taxon>
        <taxon>Muroidea</taxon>
        <taxon>Muridae</taxon>
        <taxon>Murinae</taxon>
        <taxon>Mus</taxon>
        <taxon>Mus</taxon>
    </lineage>
</organism>
<accession>E9Q793</accession>
<accession>E0CX29</accession>
<accession>Q9CUE4</accession>
<reference key="1">
    <citation type="journal article" date="2009" name="PLoS Biol.">
        <title>Lineage-specific biology revealed by a finished genome assembly of the mouse.</title>
        <authorList>
            <person name="Church D.M."/>
            <person name="Goodstadt L."/>
            <person name="Hillier L.W."/>
            <person name="Zody M.C."/>
            <person name="Goldstein S."/>
            <person name="She X."/>
            <person name="Bult C.J."/>
            <person name="Agarwala R."/>
            <person name="Cherry J.L."/>
            <person name="DiCuccio M."/>
            <person name="Hlavina W."/>
            <person name="Kapustin Y."/>
            <person name="Meric P."/>
            <person name="Maglott D."/>
            <person name="Birtle Z."/>
            <person name="Marques A.C."/>
            <person name="Graves T."/>
            <person name="Zhou S."/>
            <person name="Teague B."/>
            <person name="Potamousis K."/>
            <person name="Churas C."/>
            <person name="Place M."/>
            <person name="Herschleb J."/>
            <person name="Runnheim R."/>
            <person name="Forrest D."/>
            <person name="Amos-Landgraf J."/>
            <person name="Schwartz D.C."/>
            <person name="Cheng Z."/>
            <person name="Lindblad-Toh K."/>
            <person name="Eichler E.E."/>
            <person name="Ponting C.P."/>
        </authorList>
    </citation>
    <scope>NUCLEOTIDE SEQUENCE [LARGE SCALE GENOMIC DNA]</scope>
    <source>
        <strain>C57BL/6J</strain>
    </source>
</reference>
<reference key="2">
    <citation type="journal article" date="2005" name="Science">
        <title>The transcriptional landscape of the mammalian genome.</title>
        <authorList>
            <person name="Carninci P."/>
            <person name="Kasukawa T."/>
            <person name="Katayama S."/>
            <person name="Gough J."/>
            <person name="Frith M.C."/>
            <person name="Maeda N."/>
            <person name="Oyama R."/>
            <person name="Ravasi T."/>
            <person name="Lenhard B."/>
            <person name="Wells C."/>
            <person name="Kodzius R."/>
            <person name="Shimokawa K."/>
            <person name="Bajic V.B."/>
            <person name="Brenner S.E."/>
            <person name="Batalov S."/>
            <person name="Forrest A.R."/>
            <person name="Zavolan M."/>
            <person name="Davis M.J."/>
            <person name="Wilming L.G."/>
            <person name="Aidinis V."/>
            <person name="Allen J.E."/>
            <person name="Ambesi-Impiombato A."/>
            <person name="Apweiler R."/>
            <person name="Aturaliya R.N."/>
            <person name="Bailey T.L."/>
            <person name="Bansal M."/>
            <person name="Baxter L."/>
            <person name="Beisel K.W."/>
            <person name="Bersano T."/>
            <person name="Bono H."/>
            <person name="Chalk A.M."/>
            <person name="Chiu K.P."/>
            <person name="Choudhary V."/>
            <person name="Christoffels A."/>
            <person name="Clutterbuck D.R."/>
            <person name="Crowe M.L."/>
            <person name="Dalla E."/>
            <person name="Dalrymple B.P."/>
            <person name="de Bono B."/>
            <person name="Della Gatta G."/>
            <person name="di Bernardo D."/>
            <person name="Down T."/>
            <person name="Engstrom P."/>
            <person name="Fagiolini M."/>
            <person name="Faulkner G."/>
            <person name="Fletcher C.F."/>
            <person name="Fukushima T."/>
            <person name="Furuno M."/>
            <person name="Futaki S."/>
            <person name="Gariboldi M."/>
            <person name="Georgii-Hemming P."/>
            <person name="Gingeras T.R."/>
            <person name="Gojobori T."/>
            <person name="Green R.E."/>
            <person name="Gustincich S."/>
            <person name="Harbers M."/>
            <person name="Hayashi Y."/>
            <person name="Hensch T.K."/>
            <person name="Hirokawa N."/>
            <person name="Hill D."/>
            <person name="Huminiecki L."/>
            <person name="Iacono M."/>
            <person name="Ikeo K."/>
            <person name="Iwama A."/>
            <person name="Ishikawa T."/>
            <person name="Jakt M."/>
            <person name="Kanapin A."/>
            <person name="Katoh M."/>
            <person name="Kawasawa Y."/>
            <person name="Kelso J."/>
            <person name="Kitamura H."/>
            <person name="Kitano H."/>
            <person name="Kollias G."/>
            <person name="Krishnan S.P."/>
            <person name="Kruger A."/>
            <person name="Kummerfeld S.K."/>
            <person name="Kurochkin I.V."/>
            <person name="Lareau L.F."/>
            <person name="Lazarevic D."/>
            <person name="Lipovich L."/>
            <person name="Liu J."/>
            <person name="Liuni S."/>
            <person name="McWilliam S."/>
            <person name="Madan Babu M."/>
            <person name="Madera M."/>
            <person name="Marchionni L."/>
            <person name="Matsuda H."/>
            <person name="Matsuzawa S."/>
            <person name="Miki H."/>
            <person name="Mignone F."/>
            <person name="Miyake S."/>
            <person name="Morris K."/>
            <person name="Mottagui-Tabar S."/>
            <person name="Mulder N."/>
            <person name="Nakano N."/>
            <person name="Nakauchi H."/>
            <person name="Ng P."/>
            <person name="Nilsson R."/>
            <person name="Nishiguchi S."/>
            <person name="Nishikawa S."/>
            <person name="Nori F."/>
            <person name="Ohara O."/>
            <person name="Okazaki Y."/>
            <person name="Orlando V."/>
            <person name="Pang K.C."/>
            <person name="Pavan W.J."/>
            <person name="Pavesi G."/>
            <person name="Pesole G."/>
            <person name="Petrovsky N."/>
            <person name="Piazza S."/>
            <person name="Reed J."/>
            <person name="Reid J.F."/>
            <person name="Ring B.Z."/>
            <person name="Ringwald M."/>
            <person name="Rost B."/>
            <person name="Ruan Y."/>
            <person name="Salzberg S.L."/>
            <person name="Sandelin A."/>
            <person name="Schneider C."/>
            <person name="Schoenbach C."/>
            <person name="Sekiguchi K."/>
            <person name="Semple C.A."/>
            <person name="Seno S."/>
            <person name="Sessa L."/>
            <person name="Sheng Y."/>
            <person name="Shibata Y."/>
            <person name="Shimada H."/>
            <person name="Shimada K."/>
            <person name="Silva D."/>
            <person name="Sinclair B."/>
            <person name="Sperling S."/>
            <person name="Stupka E."/>
            <person name="Sugiura K."/>
            <person name="Sultana R."/>
            <person name="Takenaka Y."/>
            <person name="Taki K."/>
            <person name="Tammoja K."/>
            <person name="Tan S.L."/>
            <person name="Tang S."/>
            <person name="Taylor M.S."/>
            <person name="Tegner J."/>
            <person name="Teichmann S.A."/>
            <person name="Ueda H.R."/>
            <person name="van Nimwegen E."/>
            <person name="Verardo R."/>
            <person name="Wei C.L."/>
            <person name="Yagi K."/>
            <person name="Yamanishi H."/>
            <person name="Zabarovsky E."/>
            <person name="Zhu S."/>
            <person name="Zimmer A."/>
            <person name="Hide W."/>
            <person name="Bult C."/>
            <person name="Grimmond S.M."/>
            <person name="Teasdale R.D."/>
            <person name="Liu E.T."/>
            <person name="Brusic V."/>
            <person name="Quackenbush J."/>
            <person name="Wahlestedt C."/>
            <person name="Mattick J.S."/>
            <person name="Hume D.A."/>
            <person name="Kai C."/>
            <person name="Sasaki D."/>
            <person name="Tomaru Y."/>
            <person name="Fukuda S."/>
            <person name="Kanamori-Katayama M."/>
            <person name="Suzuki M."/>
            <person name="Aoki J."/>
            <person name="Arakawa T."/>
            <person name="Iida J."/>
            <person name="Imamura K."/>
            <person name="Itoh M."/>
            <person name="Kato T."/>
            <person name="Kawaji H."/>
            <person name="Kawagashira N."/>
            <person name="Kawashima T."/>
            <person name="Kojima M."/>
            <person name="Kondo S."/>
            <person name="Konno H."/>
            <person name="Nakano K."/>
            <person name="Ninomiya N."/>
            <person name="Nishio T."/>
            <person name="Okada M."/>
            <person name="Plessy C."/>
            <person name="Shibata K."/>
            <person name="Shiraki T."/>
            <person name="Suzuki S."/>
            <person name="Tagami M."/>
            <person name="Waki K."/>
            <person name="Watahiki A."/>
            <person name="Okamura-Oho Y."/>
            <person name="Suzuki H."/>
            <person name="Kawai J."/>
            <person name="Hayashizaki Y."/>
        </authorList>
    </citation>
    <scope>NUCLEOTIDE SEQUENCE [LARGE SCALE MRNA] OF 358-770</scope>
    <source>
        <strain>C57BL/6J</strain>
        <tissue>Testis</tissue>
    </source>
</reference>
<reference key="3">
    <citation type="journal article" date="2013" name="Dev. Biol.">
        <title>Disruption of the mouse Jhy gene causes abnormal ciliary microtubule patterning and juvenile hydrocephalus.</title>
        <authorList>
            <person name="Appelbe O.K."/>
            <person name="Bollman B."/>
            <person name="Attarwala A."/>
            <person name="Triebes L.A."/>
            <person name="Muniz-Talavera H."/>
            <person name="Curry D.J."/>
            <person name="Schmidt J.V."/>
        </authorList>
    </citation>
    <scope>FUNCTION</scope>
    <scope>TISSUE SPECIFICITY</scope>
</reference>
<protein>
    <recommendedName>
        <fullName evidence="3">Jhy protein</fullName>
    </recommendedName>
    <alternativeName>
        <fullName evidence="3">Juvenile hydrocephalus protein</fullName>
    </alternativeName>
</protein>
<evidence type="ECO:0000256" key="1">
    <source>
        <dbReference type="SAM" id="MobiDB-lite"/>
    </source>
</evidence>
<evidence type="ECO:0000269" key="2">
    <source>
    </source>
</evidence>
<evidence type="ECO:0000303" key="3">
    <source>
    </source>
</evidence>
<evidence type="ECO:0000312" key="4">
    <source>
        <dbReference type="MGI" id="MGI:1918239"/>
    </source>
</evidence>
<gene>
    <name evidence="3 4" type="primary">Jhy</name>
</gene>
<proteinExistence type="evidence at protein level"/>
<sequence>MNKYKPVPKLSSQSPVHHTNLRIPPSGRPFKKEDFLNLISKDSLESDSESLPQEAKSWSDIKDQIQDKDMEPDSLEEDSPSETEEAVNRKAAHNTNREDLSAHDAGVNHSQHQVEDKYSDLRYDPNWKNKREEGQPLAGEALPGSADSSSENLPLAPLYPSREPSMGLSAGKGKEKKSPQSEASLLGSEFLSPKYERSTRQNGFFSELSDSDQEEKSSGLSQYLKSSSSHNDVFLPGSRGPRRRKSKQYFVEKNKLTLGLPMPKTDSYLQLHNKKRGETRLEQISYPVRDTDKMTVQNDKEVENTFMDPEDKWHQRAKQLKNYQEHLSQYEDTKSGNVPRGQSSDAANGQQPSRRTAKARVRKQRKHQKGLKSLGTKELVVSQNNQNNPFQQPQNQRQTADASAKHELAAQTNASNPNLQDARTLTHNPKVTSDSFVSPKQALDRALYKNSISGLNANKRRGHRREEERILYQPQPIYVFSDTHLQDFNELPHRHESPSQRAPQSDHHMNTHRSTKTKKPAKQPQAETKYKNIEMLWKFHSSSDMEPASASPDSRLAQIMEQHQQALMQLAEVQPSEGSLASIILPPILSRVESESQLNSERSHRHQVKMARSNSEGYLLQLERGKRHRKRSSTKSSKLKGYQKRDVKLGGLGPDFASVRDKMQMLMQQKEYAQQVKDYNMKALSILSKPQTSKTESKSAISRKKALDYAKTIPKPKPPNLPDQTAKKTKNSRHSEKEGGLPEISLLEILQSRHEREKQAVAAFKVLHIV</sequence>
<feature type="chain" id="PRO_0000442261" description="Jhy protein">
    <location>
        <begin position="1"/>
        <end position="770"/>
    </location>
</feature>
<feature type="region of interest" description="Disordered" evidence="1">
    <location>
        <begin position="1"/>
        <end position="249"/>
    </location>
</feature>
<feature type="region of interest" description="Disordered" evidence="1">
    <location>
        <begin position="295"/>
        <end position="438"/>
    </location>
</feature>
<feature type="region of interest" description="Disordered" evidence="1">
    <location>
        <begin position="493"/>
        <end position="527"/>
    </location>
</feature>
<feature type="region of interest" description="Disordered" evidence="1">
    <location>
        <begin position="595"/>
        <end position="647"/>
    </location>
</feature>
<feature type="region of interest" description="Disordered" evidence="1">
    <location>
        <begin position="708"/>
        <end position="740"/>
    </location>
</feature>
<feature type="compositionally biased region" description="Basic and acidic residues" evidence="1">
    <location>
        <begin position="57"/>
        <end position="71"/>
    </location>
</feature>
<feature type="compositionally biased region" description="Acidic residues" evidence="1">
    <location>
        <begin position="72"/>
        <end position="85"/>
    </location>
</feature>
<feature type="compositionally biased region" description="Basic and acidic residues" evidence="1">
    <location>
        <begin position="112"/>
        <end position="134"/>
    </location>
</feature>
<feature type="compositionally biased region" description="Low complexity" evidence="1">
    <location>
        <begin position="218"/>
        <end position="229"/>
    </location>
</feature>
<feature type="compositionally biased region" description="Basic and acidic residues" evidence="1">
    <location>
        <begin position="295"/>
        <end position="314"/>
    </location>
</feature>
<feature type="compositionally biased region" description="Polar residues" evidence="1">
    <location>
        <begin position="340"/>
        <end position="354"/>
    </location>
</feature>
<feature type="compositionally biased region" description="Basic residues" evidence="1">
    <location>
        <begin position="355"/>
        <end position="370"/>
    </location>
</feature>
<feature type="compositionally biased region" description="Low complexity" evidence="1">
    <location>
        <begin position="383"/>
        <end position="398"/>
    </location>
</feature>
<feature type="compositionally biased region" description="Polar residues" evidence="1">
    <location>
        <begin position="410"/>
        <end position="438"/>
    </location>
</feature>
<feature type="compositionally biased region" description="Basic and acidic residues" evidence="1">
    <location>
        <begin position="493"/>
        <end position="509"/>
    </location>
</feature>
<feature type="compositionally biased region" description="Basic residues" evidence="1">
    <location>
        <begin position="510"/>
        <end position="521"/>
    </location>
</feature>
<feature type="compositionally biased region" description="Basic residues" evidence="1">
    <location>
        <begin position="625"/>
        <end position="642"/>
    </location>
</feature>